<organism>
    <name type="scientific">Streptococcus pneumoniae (strain Hungary19A-6)</name>
    <dbReference type="NCBI Taxonomy" id="487214"/>
    <lineage>
        <taxon>Bacteria</taxon>
        <taxon>Bacillati</taxon>
        <taxon>Bacillota</taxon>
        <taxon>Bacilli</taxon>
        <taxon>Lactobacillales</taxon>
        <taxon>Streptococcaceae</taxon>
        <taxon>Streptococcus</taxon>
    </lineage>
</organism>
<dbReference type="EMBL" id="CP000936">
    <property type="protein sequence ID" value="ACA35989.1"/>
    <property type="molecule type" value="Genomic_DNA"/>
</dbReference>
<dbReference type="RefSeq" id="WP_000418402.1">
    <property type="nucleotide sequence ID" value="NC_010380.1"/>
</dbReference>
<dbReference type="SMR" id="B1IA31"/>
<dbReference type="GeneID" id="45652070"/>
<dbReference type="KEGG" id="spv:SPH_0603"/>
<dbReference type="HOGENOM" id="CLU_116648_0_0_9"/>
<dbReference type="Proteomes" id="UP000002163">
    <property type="component" value="Chromosome"/>
</dbReference>
<dbReference type="GO" id="GO:0000428">
    <property type="term" value="C:DNA-directed RNA polymerase complex"/>
    <property type="evidence" value="ECO:0007669"/>
    <property type="project" value="UniProtKB-KW"/>
</dbReference>
<dbReference type="GO" id="GO:0003899">
    <property type="term" value="F:DNA-directed RNA polymerase activity"/>
    <property type="evidence" value="ECO:0007669"/>
    <property type="project" value="UniProtKB-UniRule"/>
</dbReference>
<dbReference type="GO" id="GO:0006351">
    <property type="term" value="P:DNA-templated transcription"/>
    <property type="evidence" value="ECO:0007669"/>
    <property type="project" value="InterPro"/>
</dbReference>
<dbReference type="GO" id="GO:0006355">
    <property type="term" value="P:regulation of DNA-templated transcription"/>
    <property type="evidence" value="ECO:0007669"/>
    <property type="project" value="UniProtKB-UniRule"/>
</dbReference>
<dbReference type="Gene3D" id="1.10.10.1250">
    <property type="entry name" value="RNA polymerase, subunit delta, N-terminal domain"/>
    <property type="match status" value="1"/>
</dbReference>
<dbReference type="HAMAP" id="MF_00357">
    <property type="entry name" value="RNApol_bact_RpoE"/>
    <property type="match status" value="1"/>
</dbReference>
<dbReference type="InterPro" id="IPR007759">
    <property type="entry name" value="Asxl_HARE-HTH"/>
</dbReference>
<dbReference type="InterPro" id="IPR038087">
    <property type="entry name" value="RNAP_delta_N_dom_sf"/>
</dbReference>
<dbReference type="InterPro" id="IPR029757">
    <property type="entry name" value="RpoE"/>
</dbReference>
<dbReference type="NCBIfam" id="TIGR04567">
    <property type="entry name" value="RNAP_delt_lowGC"/>
    <property type="match status" value="1"/>
</dbReference>
<dbReference type="Pfam" id="PF05066">
    <property type="entry name" value="HARE-HTH"/>
    <property type="match status" value="1"/>
</dbReference>
<dbReference type="PROSITE" id="PS51913">
    <property type="entry name" value="HTH_HARE"/>
    <property type="match status" value="1"/>
</dbReference>
<reference key="1">
    <citation type="journal article" date="2010" name="Genome Biol.">
        <title>Structure and dynamics of the pan-genome of Streptococcus pneumoniae and closely related species.</title>
        <authorList>
            <person name="Donati C."/>
            <person name="Hiller N.L."/>
            <person name="Tettelin H."/>
            <person name="Muzzi A."/>
            <person name="Croucher N.J."/>
            <person name="Angiuoli S.V."/>
            <person name="Oggioni M."/>
            <person name="Dunning Hotopp J.C."/>
            <person name="Hu F.Z."/>
            <person name="Riley D.R."/>
            <person name="Covacci A."/>
            <person name="Mitchell T.J."/>
            <person name="Bentley S.D."/>
            <person name="Kilian M."/>
            <person name="Ehrlich G.D."/>
            <person name="Rappuoli R."/>
            <person name="Moxon E.R."/>
            <person name="Masignani V."/>
        </authorList>
    </citation>
    <scope>NUCLEOTIDE SEQUENCE [LARGE SCALE GENOMIC DNA]</scope>
    <source>
        <strain>Hungary19A-6</strain>
    </source>
</reference>
<gene>
    <name evidence="1" type="primary">rpoE</name>
    <name type="ordered locus">SPH_0603</name>
</gene>
<sequence>MELEVFAGQEKSELSMIEVARAILELRGRDHEMHFSDLVNEIQNYLGTSNSDIREALPLFYTELNFDGSFISLGDNKWGLRSWYGVDEIDEEIIALEENDDDEVAPKAKKKRVNAFMDGDSDAIDYNADDPEDEDAYEADPALSYDDENPDDEKNEVEAYDAEINEIAPDDLGEDVDLNEDDDEFSDDDAETSEE</sequence>
<feature type="chain" id="PRO_1000120568" description="Probable DNA-directed RNA polymerase subunit delta">
    <location>
        <begin position="1"/>
        <end position="195"/>
    </location>
</feature>
<feature type="domain" description="HTH HARE-type" evidence="2">
    <location>
        <begin position="14"/>
        <end position="83"/>
    </location>
</feature>
<feature type="region of interest" description="Disordered" evidence="3">
    <location>
        <begin position="120"/>
        <end position="195"/>
    </location>
</feature>
<feature type="compositionally biased region" description="Acidic residues" evidence="3">
    <location>
        <begin position="120"/>
        <end position="138"/>
    </location>
</feature>
<feature type="compositionally biased region" description="Acidic residues" evidence="3">
    <location>
        <begin position="145"/>
        <end position="195"/>
    </location>
</feature>
<accession>B1IA31</accession>
<proteinExistence type="inferred from homology"/>
<name>RPOE_STRPI</name>
<keyword id="KW-0240">DNA-directed RNA polymerase</keyword>
<keyword id="KW-0548">Nucleotidyltransferase</keyword>
<keyword id="KW-0804">Transcription</keyword>
<keyword id="KW-0808">Transferase</keyword>
<evidence type="ECO:0000255" key="1">
    <source>
        <dbReference type="HAMAP-Rule" id="MF_00357"/>
    </source>
</evidence>
<evidence type="ECO:0000255" key="2">
    <source>
        <dbReference type="PROSITE-ProRule" id="PRU01261"/>
    </source>
</evidence>
<evidence type="ECO:0000256" key="3">
    <source>
        <dbReference type="SAM" id="MobiDB-lite"/>
    </source>
</evidence>
<protein>
    <recommendedName>
        <fullName evidence="1">Probable DNA-directed RNA polymerase subunit delta</fullName>
    </recommendedName>
    <alternativeName>
        <fullName evidence="1">RNAP delta factor</fullName>
    </alternativeName>
</protein>
<comment type="function">
    <text evidence="1">Participates in both the initiation and recycling phases of transcription. In the presence of the delta subunit, RNAP displays an increased specificity of transcription, a decreased affinity for nucleic acids, and an increased efficiency of RNA synthesis because of enhanced recycling.</text>
</comment>
<comment type="subunit">
    <text evidence="1">RNAP is composed of a core of 2 alpha, a beta and a beta' subunits. The core is associated with a delta subunit and one of several sigma factors.</text>
</comment>
<comment type="similarity">
    <text evidence="1">Belongs to the RpoE family.</text>
</comment>